<comment type="function">
    <text evidence="1">Maltosyltransferase that uses maltose 1-phosphate (M1P) as the sugar donor to elongate linear or branched alpha-(1-&gt;4)-glucans. Is involved in a branched alpha-glucan biosynthetic pathway from trehalose, together with TreS, Mak and GlgB.</text>
</comment>
<comment type="catalytic activity">
    <reaction evidence="1">
        <text>alpha-maltose 1-phosphate + [(1-&gt;4)-alpha-D-glucosyl](n) = [(1-&gt;4)-alpha-D-glucosyl](n+2) + phosphate</text>
        <dbReference type="Rhea" id="RHEA:42692"/>
        <dbReference type="Rhea" id="RHEA-COMP:9584"/>
        <dbReference type="Rhea" id="RHEA-COMP:10183"/>
        <dbReference type="ChEBI" id="CHEBI:15444"/>
        <dbReference type="ChEBI" id="CHEBI:43474"/>
        <dbReference type="ChEBI" id="CHEBI:63576"/>
        <dbReference type="EC" id="2.4.99.16"/>
    </reaction>
</comment>
<comment type="subunit">
    <text evidence="1">Homodimer.</text>
</comment>
<comment type="similarity">
    <text evidence="1">Belongs to the glycosyl hydrolase 13 family. GlgE subfamily.</text>
</comment>
<dbReference type="EC" id="2.4.99.16" evidence="1"/>
<dbReference type="EMBL" id="AE006470">
    <property type="protein sequence ID" value="AAM73306.1"/>
    <property type="molecule type" value="Genomic_DNA"/>
</dbReference>
<dbReference type="RefSeq" id="NP_662964.1">
    <property type="nucleotide sequence ID" value="NC_002932.3"/>
</dbReference>
<dbReference type="RefSeq" id="WP_010933744.1">
    <property type="nucleotide sequence ID" value="NC_002932.3"/>
</dbReference>
<dbReference type="SMR" id="Q8KAR6"/>
<dbReference type="STRING" id="194439.CT2089"/>
<dbReference type="CAZy" id="GH13">
    <property type="family name" value="Glycoside Hydrolase Family 13"/>
</dbReference>
<dbReference type="EnsemblBacteria" id="AAM73306">
    <property type="protein sequence ID" value="AAM73306"/>
    <property type="gene ID" value="CT2089"/>
</dbReference>
<dbReference type="KEGG" id="cte:CT2089"/>
<dbReference type="PATRIC" id="fig|194439.7.peg.1892"/>
<dbReference type="eggNOG" id="COG0366">
    <property type="taxonomic scope" value="Bacteria"/>
</dbReference>
<dbReference type="HOGENOM" id="CLU_015798_0_0_10"/>
<dbReference type="OrthoDB" id="9805159at2"/>
<dbReference type="Proteomes" id="UP000001007">
    <property type="component" value="Chromosome"/>
</dbReference>
<dbReference type="GO" id="GO:0016758">
    <property type="term" value="F:hexosyltransferase activity"/>
    <property type="evidence" value="ECO:0007669"/>
    <property type="project" value="UniProtKB-UniRule"/>
</dbReference>
<dbReference type="GO" id="GO:0004553">
    <property type="term" value="F:hydrolase activity, hydrolyzing O-glycosyl compounds"/>
    <property type="evidence" value="ECO:0007669"/>
    <property type="project" value="InterPro"/>
</dbReference>
<dbReference type="GO" id="GO:0030979">
    <property type="term" value="P:alpha-glucan biosynthetic process"/>
    <property type="evidence" value="ECO:0007669"/>
    <property type="project" value="UniProtKB-UniRule"/>
</dbReference>
<dbReference type="CDD" id="cd11344">
    <property type="entry name" value="AmyAc_GlgE_like"/>
    <property type="match status" value="1"/>
</dbReference>
<dbReference type="Gene3D" id="3.20.20.80">
    <property type="entry name" value="Glycosidases"/>
    <property type="match status" value="1"/>
</dbReference>
<dbReference type="Gene3D" id="2.60.40.1180">
    <property type="entry name" value="Golgi alpha-mannosidase II"/>
    <property type="match status" value="1"/>
</dbReference>
<dbReference type="Gene3D" id="2.60.40.10">
    <property type="entry name" value="Immunoglobulins"/>
    <property type="match status" value="1"/>
</dbReference>
<dbReference type="Gene3D" id="1.20.58.80">
    <property type="entry name" value="Phosphotransferase system, lactose/cellobiose-type IIA subunit"/>
    <property type="match status" value="1"/>
</dbReference>
<dbReference type="HAMAP" id="MF_02124">
    <property type="entry name" value="GlgE"/>
    <property type="match status" value="1"/>
</dbReference>
<dbReference type="InterPro" id="IPR026585">
    <property type="entry name" value="GlgE"/>
</dbReference>
<dbReference type="InterPro" id="IPR049171">
    <property type="entry name" value="GLGE_C"/>
</dbReference>
<dbReference type="InterPro" id="IPR021828">
    <property type="entry name" value="GlgE_dom_N/S"/>
</dbReference>
<dbReference type="InterPro" id="IPR006047">
    <property type="entry name" value="Glyco_hydro_13_cat_dom"/>
</dbReference>
<dbReference type="InterPro" id="IPR013780">
    <property type="entry name" value="Glyco_hydro_b"/>
</dbReference>
<dbReference type="InterPro" id="IPR017853">
    <property type="entry name" value="Glycoside_hydrolase_SF"/>
</dbReference>
<dbReference type="InterPro" id="IPR013783">
    <property type="entry name" value="Ig-like_fold"/>
</dbReference>
<dbReference type="PANTHER" id="PTHR47786">
    <property type="entry name" value="ALPHA-1,4-GLUCAN:MALTOSE-1-PHOSPHATE MALTOSYLTRANSFERASE"/>
    <property type="match status" value="1"/>
</dbReference>
<dbReference type="PANTHER" id="PTHR47786:SF2">
    <property type="entry name" value="GLYCOSYL HYDROLASE FAMILY 13 CATALYTIC DOMAIN-CONTAINING PROTEIN"/>
    <property type="match status" value="1"/>
</dbReference>
<dbReference type="Pfam" id="PF00128">
    <property type="entry name" value="Alpha-amylase"/>
    <property type="match status" value="1"/>
</dbReference>
<dbReference type="Pfam" id="PF21702">
    <property type="entry name" value="GLGE_C"/>
    <property type="match status" value="1"/>
</dbReference>
<dbReference type="Pfam" id="PF11896">
    <property type="entry name" value="GlgE_dom_N_S"/>
    <property type="match status" value="1"/>
</dbReference>
<dbReference type="SMART" id="SM00642">
    <property type="entry name" value="Aamy"/>
    <property type="match status" value="1"/>
</dbReference>
<dbReference type="SUPFAM" id="SSF51445">
    <property type="entry name" value="(Trans)glycosidases"/>
    <property type="match status" value="1"/>
</dbReference>
<reference key="1">
    <citation type="journal article" date="2002" name="Proc. Natl. Acad. Sci. U.S.A.">
        <title>The complete genome sequence of Chlorobium tepidum TLS, a photosynthetic, anaerobic, green-sulfur bacterium.</title>
        <authorList>
            <person name="Eisen J.A."/>
            <person name="Nelson K.E."/>
            <person name="Paulsen I.T."/>
            <person name="Heidelberg J.F."/>
            <person name="Wu M."/>
            <person name="Dodson R.J."/>
            <person name="DeBoy R.T."/>
            <person name="Gwinn M.L."/>
            <person name="Nelson W.C."/>
            <person name="Haft D.H."/>
            <person name="Hickey E.K."/>
            <person name="Peterson J.D."/>
            <person name="Durkin A.S."/>
            <person name="Kolonay J.F."/>
            <person name="Yang F."/>
            <person name="Holt I.E."/>
            <person name="Umayam L.A."/>
            <person name="Mason T.M."/>
            <person name="Brenner M."/>
            <person name="Shea T.P."/>
            <person name="Parksey D.S."/>
            <person name="Nierman W.C."/>
            <person name="Feldblyum T.V."/>
            <person name="Hansen C.L."/>
            <person name="Craven M.B."/>
            <person name="Radune D."/>
            <person name="Vamathevan J.J."/>
            <person name="Khouri H.M."/>
            <person name="White O."/>
            <person name="Gruber T.M."/>
            <person name="Ketchum K.A."/>
            <person name="Venter J.C."/>
            <person name="Tettelin H."/>
            <person name="Bryant D.A."/>
            <person name="Fraser C.M."/>
        </authorList>
    </citation>
    <scope>NUCLEOTIDE SEQUENCE [LARGE SCALE GENOMIC DNA]</scope>
    <source>
        <strain>ATCC 49652 / DSM 12025 / NBRC 103806 / TLS</strain>
    </source>
</reference>
<organism>
    <name type="scientific">Chlorobaculum tepidum (strain ATCC 49652 / DSM 12025 / NBRC 103806 / TLS)</name>
    <name type="common">Chlorobium tepidum</name>
    <dbReference type="NCBI Taxonomy" id="194439"/>
    <lineage>
        <taxon>Bacteria</taxon>
        <taxon>Pseudomonadati</taxon>
        <taxon>Chlorobiota</taxon>
        <taxon>Chlorobiia</taxon>
        <taxon>Chlorobiales</taxon>
        <taxon>Chlorobiaceae</taxon>
        <taxon>Chlorobaculum</taxon>
    </lineage>
</organism>
<feature type="chain" id="PRO_0000413894" description="Alpha-1,4-glucan:maltose-1-phosphate maltosyltransferase">
    <location>
        <begin position="1"/>
        <end position="670"/>
    </location>
</feature>
<feature type="active site" description="Nucleophile" evidence="1">
    <location>
        <position position="393"/>
    </location>
</feature>
<feature type="active site" description="Proton donor" evidence="1">
    <location>
        <position position="422"/>
    </location>
</feature>
<feature type="binding site" evidence="1">
    <location>
        <position position="262"/>
    </location>
    <ligand>
        <name>alpha-maltose 1-phosphate</name>
        <dbReference type="ChEBI" id="CHEBI:63576"/>
    </ligand>
</feature>
<feature type="binding site" evidence="1">
    <location>
        <position position="322"/>
    </location>
    <ligand>
        <name>alpha-maltose 1-phosphate</name>
        <dbReference type="ChEBI" id="CHEBI:63576"/>
    </ligand>
</feature>
<feature type="binding site" evidence="1">
    <location>
        <position position="357"/>
    </location>
    <ligand>
        <name>alpha-maltose 1-phosphate</name>
        <dbReference type="ChEBI" id="CHEBI:63576"/>
    </ligand>
</feature>
<feature type="binding site" evidence="1">
    <location>
        <position position="394"/>
    </location>
    <ligand>
        <name>alpha-maltose 1-phosphate</name>
        <dbReference type="ChEBI" id="CHEBI:63576"/>
    </ligand>
</feature>
<feature type="binding site" evidence="1">
    <location>
        <begin position="534"/>
        <end position="535"/>
    </location>
    <ligand>
        <name>alpha-maltose 1-phosphate</name>
        <dbReference type="ChEBI" id="CHEBI:63576"/>
    </ligand>
</feature>
<feature type="site" description="Transition state stabilizer" evidence="1">
    <location>
        <position position="480"/>
    </location>
</feature>
<keyword id="KW-0119">Carbohydrate metabolism</keyword>
<keyword id="KW-0328">Glycosyltransferase</keyword>
<keyword id="KW-1185">Reference proteome</keyword>
<keyword id="KW-0808">Transferase</keyword>
<evidence type="ECO:0000255" key="1">
    <source>
        <dbReference type="HAMAP-Rule" id="MF_02124"/>
    </source>
</evidence>
<accession>Q8KAR6</accession>
<gene>
    <name evidence="1" type="primary">glgE</name>
    <name type="ordered locus">CT2089</name>
</gene>
<proteinExistence type="inferred from homology"/>
<name>GLGE_CHLTE</name>
<protein>
    <recommendedName>
        <fullName evidence="1">Alpha-1,4-glucan:maltose-1-phosphate maltosyltransferase</fullName>
        <shortName evidence="1">GMPMT</shortName>
        <ecNumber evidence="1">2.4.99.16</ecNumber>
    </recommendedName>
    <alternativeName>
        <fullName evidence="1">(1-&gt;4)-alpha-D-glucan:maltose-1-phosphate alpha-D-maltosyltransferase</fullName>
    </alternativeName>
</protein>
<sequence length="670" mass="76608">MKPEFVLPAPIRLDRPFDGRRRVVIDRVFPEIDGGRFPVKRVEGDRMTVEADIFTDGADTIVAELLYRRKGEAAWSAVPMTHIGNDRWKASFEVGAPGMCEYTVQGWVDHFETWRKGLQKKLDAGQDVSLDLRIGATIVELGAARAKDEDAGTLHHYVGLLSVGGSDAAVEAALSEGLLAAMRRSPEKAMATLYDKILLLQIDQKKAGFSTWYEFFPRSWSEEPGKHGTFRDCIKLLPRIARMGFDVIYLPPIHPIGLTKRKGKNNALVAGPDDPGSCWAIGSADGGHTSVHPELGTMEEFEAFVQEAEAQGISVALDIAFQCSPDHPWVKEHPQWFRWRPDGTVQFAENPPKRYEDILPIDFESEDWQNLWIALREVFLFWIGKGVKIFRVDNPHTKAFGFWEWALGSIREQYPETMFLAEAFTRPKLMARLAKGGYTHSYTYFTWRNTKHELQEYLTELTQTELREYMRPNFWPNTPDILHEELQGGSRARFIIRFVLAATLSSNYGIYGPAYELCEHVPYPGKEEYLDSEKYEIKQWDLDRPGNIRSEIAMVNRIRHNNPALQQTSDITFVKIEVSQGQEHDQLMGYVKCSPDGANIILTVVTLDDRNTQGGWLRFPLEKFGRPHTERFTVEDLISGRTFEWNGEWNYVELNPHQMPAHIFRVNLPS</sequence>